<proteinExistence type="inferred from homology"/>
<accession>Q112X4</accession>
<name>THIG_TRIEI</name>
<comment type="function">
    <text evidence="1">Catalyzes the rearrangement of 1-deoxy-D-xylulose 5-phosphate (DXP) to produce the thiazole phosphate moiety of thiamine. Sulfur is provided by the thiocarboxylate moiety of the carrier protein ThiS. In vitro, sulfur can be provided by H(2)S.</text>
</comment>
<comment type="catalytic activity">
    <reaction evidence="1">
        <text>[ThiS sulfur-carrier protein]-C-terminal-Gly-aminoethanethioate + 2-iminoacetate + 1-deoxy-D-xylulose 5-phosphate = [ThiS sulfur-carrier protein]-C-terminal Gly-Gly + 2-[(2R,5Z)-2-carboxy-4-methylthiazol-5(2H)-ylidene]ethyl phosphate + 2 H2O + H(+)</text>
        <dbReference type="Rhea" id="RHEA:26297"/>
        <dbReference type="Rhea" id="RHEA-COMP:12909"/>
        <dbReference type="Rhea" id="RHEA-COMP:19908"/>
        <dbReference type="ChEBI" id="CHEBI:15377"/>
        <dbReference type="ChEBI" id="CHEBI:15378"/>
        <dbReference type="ChEBI" id="CHEBI:57792"/>
        <dbReference type="ChEBI" id="CHEBI:62899"/>
        <dbReference type="ChEBI" id="CHEBI:77846"/>
        <dbReference type="ChEBI" id="CHEBI:90778"/>
        <dbReference type="ChEBI" id="CHEBI:232372"/>
        <dbReference type="EC" id="2.8.1.10"/>
    </reaction>
</comment>
<comment type="pathway">
    <text evidence="1">Cofactor biosynthesis; thiamine diphosphate biosynthesis.</text>
</comment>
<comment type="subunit">
    <text evidence="1">Homotetramer. Forms heterodimers with either ThiH or ThiS.</text>
</comment>
<comment type="subcellular location">
    <subcellularLocation>
        <location evidence="1">Cytoplasm</location>
    </subcellularLocation>
</comment>
<comment type="similarity">
    <text evidence="1">Belongs to the ThiG family.</text>
</comment>
<keyword id="KW-0963">Cytoplasm</keyword>
<keyword id="KW-0704">Schiff base</keyword>
<keyword id="KW-0784">Thiamine biosynthesis</keyword>
<keyword id="KW-0808">Transferase</keyword>
<sequence>MQTVEKLTTETLEKPLIIAGKKFTSRLMTGTGKYPTIETMQQSIEASKCEIITVAVRRVQTQAPGHKGLAEAIDWQKVWMLPNTAGCQTAEDAVRVARLGREMAKLLGQEDNNFVKLEVIPDSKYLLPDPIGTLQAAEQLIKEGFAVLPYINADPLLAKRLEEAGCSTVMPLGSPIGSGQGIQNAANISIIIDNSTVPVVIDAGIGTPSEATQAMEMGADALLINSAIALAKNPPIMAKAMGMATESGRLAYLAGRIPKKSYATPSSPVTGKINTTTSE</sequence>
<protein>
    <recommendedName>
        <fullName evidence="1">Thiazole synthase</fullName>
        <ecNumber evidence="1">2.8.1.10</ecNumber>
    </recommendedName>
</protein>
<organism>
    <name type="scientific">Trichodesmium erythraeum (strain IMS101)</name>
    <dbReference type="NCBI Taxonomy" id="203124"/>
    <lineage>
        <taxon>Bacteria</taxon>
        <taxon>Bacillati</taxon>
        <taxon>Cyanobacteriota</taxon>
        <taxon>Cyanophyceae</taxon>
        <taxon>Oscillatoriophycideae</taxon>
        <taxon>Oscillatoriales</taxon>
        <taxon>Microcoleaceae</taxon>
        <taxon>Trichodesmium</taxon>
    </lineage>
</organism>
<gene>
    <name evidence="1" type="primary">thiG</name>
    <name type="ordered locus">Tery_2221</name>
</gene>
<reference key="1">
    <citation type="journal article" date="2015" name="Proc. Natl. Acad. Sci. U.S.A.">
        <title>Trichodesmium genome maintains abundant, widespread noncoding DNA in situ, despite oligotrophic lifestyle.</title>
        <authorList>
            <person name="Walworth N."/>
            <person name="Pfreundt U."/>
            <person name="Nelson W.C."/>
            <person name="Mincer T."/>
            <person name="Heidelberg J.F."/>
            <person name="Fu F."/>
            <person name="Waterbury J.B."/>
            <person name="Glavina del Rio T."/>
            <person name="Goodwin L."/>
            <person name="Kyrpides N.C."/>
            <person name="Land M.L."/>
            <person name="Woyke T."/>
            <person name="Hutchins D.A."/>
            <person name="Hess W.R."/>
            <person name="Webb E.A."/>
        </authorList>
    </citation>
    <scope>NUCLEOTIDE SEQUENCE [LARGE SCALE GENOMIC DNA]</scope>
    <source>
        <strain>IMS101</strain>
    </source>
</reference>
<dbReference type="EC" id="2.8.1.10" evidence="1"/>
<dbReference type="EMBL" id="CP000393">
    <property type="protein sequence ID" value="ABG51450.1"/>
    <property type="molecule type" value="Genomic_DNA"/>
</dbReference>
<dbReference type="RefSeq" id="WP_011611819.1">
    <property type="nucleotide sequence ID" value="NC_008312.1"/>
</dbReference>
<dbReference type="SMR" id="Q112X4"/>
<dbReference type="STRING" id="203124.Tery_2221"/>
<dbReference type="KEGG" id="ter:Tery_2221"/>
<dbReference type="eggNOG" id="COG2022">
    <property type="taxonomic scope" value="Bacteria"/>
</dbReference>
<dbReference type="HOGENOM" id="CLU_062233_1_0_3"/>
<dbReference type="OrthoDB" id="9805935at2"/>
<dbReference type="UniPathway" id="UPA00060"/>
<dbReference type="GO" id="GO:0005737">
    <property type="term" value="C:cytoplasm"/>
    <property type="evidence" value="ECO:0007669"/>
    <property type="project" value="UniProtKB-SubCell"/>
</dbReference>
<dbReference type="GO" id="GO:1990107">
    <property type="term" value="F:thiazole synthase activity"/>
    <property type="evidence" value="ECO:0007669"/>
    <property type="project" value="UniProtKB-EC"/>
</dbReference>
<dbReference type="GO" id="GO:0009229">
    <property type="term" value="P:thiamine diphosphate biosynthetic process"/>
    <property type="evidence" value="ECO:0007669"/>
    <property type="project" value="UniProtKB-UniRule"/>
</dbReference>
<dbReference type="CDD" id="cd04728">
    <property type="entry name" value="ThiG"/>
    <property type="match status" value="1"/>
</dbReference>
<dbReference type="Gene3D" id="3.20.20.70">
    <property type="entry name" value="Aldolase class I"/>
    <property type="match status" value="1"/>
</dbReference>
<dbReference type="HAMAP" id="MF_00443">
    <property type="entry name" value="ThiG"/>
    <property type="match status" value="1"/>
</dbReference>
<dbReference type="InterPro" id="IPR013785">
    <property type="entry name" value="Aldolase_TIM"/>
</dbReference>
<dbReference type="InterPro" id="IPR033983">
    <property type="entry name" value="Thiazole_synthase_ThiG"/>
</dbReference>
<dbReference type="InterPro" id="IPR008867">
    <property type="entry name" value="ThiG"/>
</dbReference>
<dbReference type="PANTHER" id="PTHR34266">
    <property type="entry name" value="THIAZOLE SYNTHASE"/>
    <property type="match status" value="1"/>
</dbReference>
<dbReference type="PANTHER" id="PTHR34266:SF2">
    <property type="entry name" value="THIAZOLE SYNTHASE"/>
    <property type="match status" value="1"/>
</dbReference>
<dbReference type="Pfam" id="PF05690">
    <property type="entry name" value="ThiG"/>
    <property type="match status" value="1"/>
</dbReference>
<dbReference type="SUPFAM" id="SSF110399">
    <property type="entry name" value="ThiG-like"/>
    <property type="match status" value="1"/>
</dbReference>
<evidence type="ECO:0000255" key="1">
    <source>
        <dbReference type="HAMAP-Rule" id="MF_00443"/>
    </source>
</evidence>
<feature type="chain" id="PRO_1000026053" description="Thiazole synthase">
    <location>
        <begin position="1"/>
        <end position="279"/>
    </location>
</feature>
<feature type="active site" description="Schiff-base intermediate with DXP" evidence="1">
    <location>
        <position position="116"/>
    </location>
</feature>
<feature type="binding site" evidence="1">
    <location>
        <position position="177"/>
    </location>
    <ligand>
        <name>1-deoxy-D-xylulose 5-phosphate</name>
        <dbReference type="ChEBI" id="CHEBI:57792"/>
    </ligand>
</feature>
<feature type="binding site" evidence="1">
    <location>
        <begin position="203"/>
        <end position="204"/>
    </location>
    <ligand>
        <name>1-deoxy-D-xylulose 5-phosphate</name>
        <dbReference type="ChEBI" id="CHEBI:57792"/>
    </ligand>
</feature>
<feature type="binding site" evidence="1">
    <location>
        <begin position="225"/>
        <end position="226"/>
    </location>
    <ligand>
        <name>1-deoxy-D-xylulose 5-phosphate</name>
        <dbReference type="ChEBI" id="CHEBI:57792"/>
    </ligand>
</feature>